<reference key="1">
    <citation type="journal article" date="1999" name="Nature">
        <title>Sequence and analysis of chromosome 2 of the plant Arabidopsis thaliana.</title>
        <authorList>
            <person name="Lin X."/>
            <person name="Kaul S."/>
            <person name="Rounsley S.D."/>
            <person name="Shea T.P."/>
            <person name="Benito M.-I."/>
            <person name="Town C.D."/>
            <person name="Fujii C.Y."/>
            <person name="Mason T.M."/>
            <person name="Bowman C.L."/>
            <person name="Barnstead M.E."/>
            <person name="Feldblyum T.V."/>
            <person name="Buell C.R."/>
            <person name="Ketchum K.A."/>
            <person name="Lee J.J."/>
            <person name="Ronning C.M."/>
            <person name="Koo H.L."/>
            <person name="Moffat K.S."/>
            <person name="Cronin L.A."/>
            <person name="Shen M."/>
            <person name="Pai G."/>
            <person name="Van Aken S."/>
            <person name="Umayam L."/>
            <person name="Tallon L.J."/>
            <person name="Gill J.E."/>
            <person name="Adams M.D."/>
            <person name="Carrera A.J."/>
            <person name="Creasy T.H."/>
            <person name="Goodman H.M."/>
            <person name="Somerville C.R."/>
            <person name="Copenhaver G.P."/>
            <person name="Preuss D."/>
            <person name="Nierman W.C."/>
            <person name="White O."/>
            <person name="Eisen J.A."/>
            <person name="Salzberg S.L."/>
            <person name="Fraser C.M."/>
            <person name="Venter J.C."/>
        </authorList>
    </citation>
    <scope>NUCLEOTIDE SEQUENCE [LARGE SCALE GENOMIC DNA]</scope>
    <source>
        <strain>cv. Columbia</strain>
    </source>
</reference>
<reference key="2">
    <citation type="journal article" date="2017" name="Plant J.">
        <title>Araport11: a complete reannotation of the Arabidopsis thaliana reference genome.</title>
        <authorList>
            <person name="Cheng C.Y."/>
            <person name="Krishnakumar V."/>
            <person name="Chan A.P."/>
            <person name="Thibaud-Nissen F."/>
            <person name="Schobel S."/>
            <person name="Town C.D."/>
        </authorList>
    </citation>
    <scope>GENOME REANNOTATION</scope>
    <source>
        <strain>cv. Columbia</strain>
    </source>
</reference>
<reference key="3">
    <citation type="journal article" date="2002" name="In Silico Biol.">
        <title>Peptomics, identification of novel cationic Arabidopsis peptides with conserved sequence motifs.</title>
        <authorList>
            <person name="Olsen A.N."/>
            <person name="Mundy J."/>
            <person name="Skriver K."/>
        </authorList>
    </citation>
    <scope>GENE FAMILY</scope>
    <scope>NOMENCLATURE</scope>
</reference>
<name>RLF16_ARATH</name>
<feature type="signal peptide" evidence="2">
    <location>
        <begin position="1"/>
        <end position="29"/>
    </location>
</feature>
<feature type="chain" id="PRO_0000420308" description="Protein RALF-like 16">
    <location>
        <begin position="30"/>
        <end position="95"/>
    </location>
</feature>
<feature type="disulfide bond" evidence="1">
    <location>
        <begin position="45"/>
        <end position="53"/>
    </location>
</feature>
<feature type="disulfide bond" evidence="1">
    <location>
        <begin position="65"/>
        <end position="71"/>
    </location>
</feature>
<proteinExistence type="inferred from homology"/>
<comment type="function">
    <text evidence="1">Cell signaling peptide that may regulate plant stress, growth, and development. Mediates a rapid alkalinization of extracellular space by mediating a transient increase in the cytoplasmic Ca(2+) concentration leading to a calcium-dependent signaling events through a cell surface receptor and a concomitant activation of some intracellular mitogen-activated protein kinases (By similarity).</text>
</comment>
<comment type="subcellular location">
    <subcellularLocation>
        <location evidence="1">Secreted</location>
    </subcellularLocation>
</comment>
<comment type="similarity">
    <text evidence="3">Belongs to the plant rapid alkalinization factor (RALF) family.</text>
</comment>
<sequence>MVAYEKSPIVFLFATMMLVMFLFCGSGEARTLGYGSIKGDRIPACGYKNPNSCVKQPVNHYHRGCEKITRCARDAARYTESFNVDDDESPIINLH</sequence>
<keyword id="KW-1015">Disulfide bond</keyword>
<keyword id="KW-0372">Hormone</keyword>
<keyword id="KW-1185">Reference proteome</keyword>
<keyword id="KW-0964">Secreted</keyword>
<keyword id="KW-0732">Signal</keyword>
<protein>
    <recommendedName>
        <fullName>Protein RALF-like 16</fullName>
    </recommendedName>
</protein>
<dbReference type="EMBL" id="AC003974">
    <property type="status" value="NOT_ANNOTATED_CDS"/>
    <property type="molecule type" value="Genomic_DNA"/>
</dbReference>
<dbReference type="EMBL" id="CP002685">
    <property type="protein sequence ID" value="AEC08748.1"/>
    <property type="molecule type" value="Genomic_DNA"/>
</dbReference>
<dbReference type="RefSeq" id="NP_001077997.1">
    <property type="nucleotide sequence ID" value="NM_001084528.1"/>
</dbReference>
<dbReference type="STRING" id="3702.A8MRM1"/>
<dbReference type="PaxDb" id="3702-AT2G32835.1"/>
<dbReference type="EnsemblPlants" id="AT2G32835.1">
    <property type="protein sequence ID" value="AT2G32835.1"/>
    <property type="gene ID" value="AT2G32835"/>
</dbReference>
<dbReference type="GeneID" id="5007923"/>
<dbReference type="Gramene" id="AT2G32835.1">
    <property type="protein sequence ID" value="AT2G32835.1"/>
    <property type="gene ID" value="AT2G32835"/>
</dbReference>
<dbReference type="KEGG" id="ath:AT2G32835"/>
<dbReference type="Araport" id="AT2G32835"/>
<dbReference type="TAIR" id="AT2G32835">
    <property type="gene designation" value="RALFL16"/>
</dbReference>
<dbReference type="eggNOG" id="ENOG502SWZK">
    <property type="taxonomic scope" value="Eukaryota"/>
</dbReference>
<dbReference type="HOGENOM" id="CLU_184731_0_0_1"/>
<dbReference type="InParanoid" id="A8MRM1"/>
<dbReference type="OMA" id="DRIPACG"/>
<dbReference type="OrthoDB" id="10279792at2759"/>
<dbReference type="PhylomeDB" id="A8MRM1"/>
<dbReference type="PRO" id="PR:A8MRM1"/>
<dbReference type="Proteomes" id="UP000006548">
    <property type="component" value="Chromosome 2"/>
</dbReference>
<dbReference type="ExpressionAtlas" id="A8MRM1">
    <property type="expression patterns" value="baseline"/>
</dbReference>
<dbReference type="GO" id="GO:0048046">
    <property type="term" value="C:apoplast"/>
    <property type="evidence" value="ECO:0000250"/>
    <property type="project" value="TAIR"/>
</dbReference>
<dbReference type="GO" id="GO:0005179">
    <property type="term" value="F:hormone activity"/>
    <property type="evidence" value="ECO:0000250"/>
    <property type="project" value="UniProtKB"/>
</dbReference>
<dbReference type="GO" id="GO:0019722">
    <property type="term" value="P:calcium-mediated signaling"/>
    <property type="evidence" value="ECO:0000250"/>
    <property type="project" value="UniProtKB"/>
</dbReference>
<dbReference type="GO" id="GO:0007267">
    <property type="term" value="P:cell-cell signaling"/>
    <property type="evidence" value="ECO:0000250"/>
    <property type="project" value="TAIR"/>
</dbReference>
<dbReference type="GO" id="GO:0040008">
    <property type="term" value="P:regulation of growth"/>
    <property type="evidence" value="ECO:0007669"/>
    <property type="project" value="UniProtKB-ARBA"/>
</dbReference>
<dbReference type="InterPro" id="IPR008801">
    <property type="entry name" value="RALF"/>
</dbReference>
<dbReference type="PANTHER" id="PTHR34270">
    <property type="entry name" value="PROTEIN RALF-LIKE 15-RELATED"/>
    <property type="match status" value="1"/>
</dbReference>
<dbReference type="PANTHER" id="PTHR34270:SF3">
    <property type="entry name" value="PROTEIN RALF-LIKE 16-RELATED"/>
    <property type="match status" value="1"/>
</dbReference>
<dbReference type="Pfam" id="PF05498">
    <property type="entry name" value="RALF"/>
    <property type="match status" value="1"/>
</dbReference>
<gene>
    <name type="primary">RALFL16</name>
    <name type="ordered locus">At2g32835</name>
    <name type="ORF">F24L7</name>
</gene>
<organism>
    <name type="scientific">Arabidopsis thaliana</name>
    <name type="common">Mouse-ear cress</name>
    <dbReference type="NCBI Taxonomy" id="3702"/>
    <lineage>
        <taxon>Eukaryota</taxon>
        <taxon>Viridiplantae</taxon>
        <taxon>Streptophyta</taxon>
        <taxon>Embryophyta</taxon>
        <taxon>Tracheophyta</taxon>
        <taxon>Spermatophyta</taxon>
        <taxon>Magnoliopsida</taxon>
        <taxon>eudicotyledons</taxon>
        <taxon>Gunneridae</taxon>
        <taxon>Pentapetalae</taxon>
        <taxon>rosids</taxon>
        <taxon>malvids</taxon>
        <taxon>Brassicales</taxon>
        <taxon>Brassicaceae</taxon>
        <taxon>Camelineae</taxon>
        <taxon>Arabidopsis</taxon>
    </lineage>
</organism>
<evidence type="ECO:0000250" key="1"/>
<evidence type="ECO:0000255" key="2"/>
<evidence type="ECO:0000305" key="3"/>
<accession>A8MRM1</accession>